<protein>
    <recommendedName>
        <fullName>Lhr helicase/uracil glycosylase</fullName>
        <ecNumber evidence="7">3.2.2.27</ecNumber>
        <ecNumber evidence="6">5.6.2.-</ecNumber>
        <ecNumber evidence="6">5.6.2.4</ecNumber>
    </recommendedName>
    <alternativeName>
        <fullName evidence="10">DNA and RNA:DNA 3'-5' helicase Lhr</fullName>
    </alternativeName>
    <alternativeName>
        <fullName evidence="9">Long helicase-related protein</fullName>
    </alternativeName>
</protein>
<name>LHR_ECOLI</name>
<accession>P30015</accession>
<feature type="chain" id="PRO_0000102193" description="Lhr helicase/uracil glycosylase">
    <location>
        <begin position="1"/>
        <end position="1538"/>
    </location>
</feature>
<feature type="domain" description="Helicase ATP-binding" evidence="2">
    <location>
        <begin position="38"/>
        <end position="235"/>
    </location>
</feature>
<feature type="domain" description="Helicase C-terminal" evidence="3">
    <location>
        <begin position="284"/>
        <end position="462"/>
    </location>
</feature>
<feature type="region of interest" description="Lhr-Core" evidence="11">
    <location>
        <begin position="1"/>
        <end position="897"/>
    </location>
</feature>
<feature type="region of interest" description="Beta-sheet bundle" evidence="11">
    <location>
        <begin position="463"/>
        <end position="552"/>
    </location>
</feature>
<feature type="region of interest" description="WH domain" evidence="11">
    <location>
        <begin position="553"/>
        <end position="623"/>
    </location>
</feature>
<feature type="region of interest" description="Domain 4" evidence="11">
    <location>
        <begin position="624"/>
        <end position="897"/>
    </location>
</feature>
<feature type="region of interest" description="Lhr-CTD" evidence="11">
    <location>
        <begin position="898"/>
        <end position="1538"/>
    </location>
</feature>
<feature type="region of interest" description="Disordered" evidence="4">
    <location>
        <begin position="1287"/>
        <end position="1312"/>
    </location>
</feature>
<feature type="short sequence motif" description="DEVH box" evidence="8">
    <location>
        <begin position="179"/>
        <end position="182"/>
    </location>
</feature>
<feature type="compositionally biased region" description="Basic residues" evidence="4">
    <location>
        <begin position="1292"/>
        <end position="1303"/>
    </location>
</feature>
<feature type="binding site" evidence="1">
    <location>
        <position position="34"/>
    </location>
    <ligand>
        <name>ATP</name>
        <dbReference type="ChEBI" id="CHEBI:30616"/>
    </ligand>
</feature>
<feature type="binding site" evidence="1">
    <location>
        <position position="57"/>
    </location>
    <ligand>
        <name>ATP</name>
        <dbReference type="ChEBI" id="CHEBI:30616"/>
    </ligand>
</feature>
<feature type="binding site" evidence="1">
    <location>
        <position position="58"/>
    </location>
    <ligand>
        <name>ATP</name>
        <dbReference type="ChEBI" id="CHEBI:30616"/>
    </ligand>
</feature>
<feature type="binding site" evidence="1">
    <location>
        <position position="179"/>
    </location>
    <ligand>
        <name>ATP</name>
        <dbReference type="ChEBI" id="CHEBI:30616"/>
    </ligand>
</feature>
<feature type="binding site" evidence="1">
    <location>
        <position position="180"/>
    </location>
    <ligand>
        <name>ATP</name>
        <dbReference type="ChEBI" id="CHEBI:30616"/>
    </ligand>
</feature>
<feature type="binding site" evidence="1">
    <location>
        <position position="398"/>
    </location>
    <ligand>
        <name>ATP</name>
        <dbReference type="ChEBI" id="CHEBI:30616"/>
    </ligand>
</feature>
<feature type="binding site" evidence="1">
    <location>
        <position position="415"/>
    </location>
    <ligand>
        <name>ATP</name>
        <dbReference type="ChEBI" id="CHEBI:30616"/>
    </ligand>
</feature>
<feature type="binding site" evidence="1">
    <location>
        <position position="418"/>
    </location>
    <ligand>
        <name>ATP</name>
        <dbReference type="ChEBI" id="CHEBI:30616"/>
    </ligand>
</feature>
<feature type="site" description="Wedges between bases of the loading strand" evidence="1">
    <location>
        <position position="549"/>
    </location>
</feature>
<feature type="mutagenesis site" description="Loss of ATPase activity." evidence="6">
    <original>DE</original>
    <variation>AA</variation>
    <location>
        <begin position="179"/>
        <end position="180"/>
    </location>
</feature>
<feature type="mutagenesis site" description="Wild-type ATPase activity, unable to perform strand displacement on a biotinylated substrate, decreased helicase activity on an RNA:DNA hybrid." evidence="6">
    <original>W</original>
    <variation>A</variation>
    <location>
        <position position="620"/>
    </location>
</feature>
<feature type="mutagenesis site" description="Loss of uracil glycosylase activity, no change in helicase activity or DNA-binding." evidence="7">
    <original>D</original>
    <variation>A</variation>
    <location>
        <position position="1536"/>
    </location>
</feature>
<comment type="function">
    <text evidence="1 6">A 3'-5' helicase probably involved in DNA repair. Translocates in an ATP-dependent manner 3'-to-5' on single-stranded (ss)DNA, unwinding any encountered duplex nucleic acid (PubMed:33744958). An RNA:DNA hybrid with a 3'-ssDNA loading strand is a 4.5-fold better helicase substrate than 3'-tailed double-stranded (ds)DNA; substrates where the helicase loads on a 3'-ssRNA tail (DNA:RNA and RNA:RNA) are not unwound (PubMed:33744958). Unlike its M.smegmatis counterpart, the ATPase is not ssDNA-dependent (PubMed:33744958). Forms a clamp around the ssDNA loading strand (By similarity).</text>
</comment>
<comment type="function">
    <text evidence="7">Excises uracil residues from DNA; forked DNA with a dU residue is the best substrate followed by ssDNA (PubMed:37452011). Inactive on dsDNA with a dU residue or DNA with an 8-oxoguanine residue (PubMed:37452011). Uracil residues in DNA can arise as a result of misincorporation of dUMP residues by DNA polymerase or due to deamination of cytosine.</text>
</comment>
<comment type="catalytic activity">
    <reaction evidence="6">
        <text>Couples ATP hydrolysis with the unwinding of duplex DNA by translocating in the 3'-5' direction.</text>
        <dbReference type="EC" id="5.6.2.4"/>
    </reaction>
</comment>
<comment type="catalytic activity">
    <reaction evidence="6">
        <text>ATP + H2O = ADP + phosphate + H(+)</text>
        <dbReference type="Rhea" id="RHEA:13065"/>
        <dbReference type="ChEBI" id="CHEBI:15377"/>
        <dbReference type="ChEBI" id="CHEBI:15378"/>
        <dbReference type="ChEBI" id="CHEBI:30616"/>
        <dbReference type="ChEBI" id="CHEBI:43474"/>
        <dbReference type="ChEBI" id="CHEBI:456216"/>
        <dbReference type="EC" id="5.6.2.4"/>
    </reaction>
</comment>
<comment type="catalytic activity">
    <reaction evidence="7">
        <text>Hydrolyzes single-stranded DNA or mismatched double-stranded DNA and polynucleotides, releasing free uracil.</text>
        <dbReference type="EC" id="3.2.2.27"/>
    </reaction>
</comment>
<comment type="cofactor">
    <cofactor evidence="6">
        <name>Ca(2+)</name>
        <dbReference type="ChEBI" id="CHEBI:29108"/>
    </cofactor>
    <text evidence="6">ATPase is most efficient with Ca(2+); Mn(2+) and Mn(2+) are 50-60% less effective.</text>
</comment>
<comment type="cofactor">
    <text evidence="7">Uracil deglycosylase activity does not require a cofactor.</text>
</comment>
<comment type="biophysicochemical properties">
    <kinetics>
        <KM evidence="6">0.17 mM for ATP</KM>
    </kinetics>
    <phDependence>
        <text evidence="6">Optimum pH is 6.5 to 9.5.</text>
    </phDependence>
</comment>
<comment type="subunit">
    <text evidence="6">Homooligomerizes, probably a homotetramer.</text>
</comment>
<comment type="domain">
    <text evidence="6 7">The Lhr-Core is composed of 2 helicase domains, a winged-helix (WH) domain, and Lhr-specific domain 4 (PubMed:33744958). It is followed by the C-terminal domain (CTD) (PubMed:33744958, PubMed:37452011). The Lhr-Core has ATPase activity but does not oligomerize (PubMed:33744958). The C-terminal domain (CTD) has uracil-DNA glycosylase activity but requires the Lhr-Core for maximal activity (PubMed:37452011). The purified Lhr-Core binds DNA, while Lhr-CTD does not (PubMed:37452011).</text>
</comment>
<comment type="disruption phenotype">
    <text evidence="5 8">Not essential, it can be deleted (PubMed:7559321). Slightly increased sensitivity to UV, azidothymidine (AZT) or ciprofloxacin (CFX), a radA-lhr double deletions is more sensitive to AZT and slightly more sensitive to CFX (PubMed:25484163). Greater sensitivity to AZT, H(2)O(2) but not to mitomycin C (PubMed:37452011).</text>
</comment>
<comment type="similarity">
    <text evidence="10">Belongs to the Lhr helicase family.</text>
</comment>
<gene>
    <name evidence="9" type="primary">lhr</name>
    <name type="synonym">rhlF</name>
    <name type="ordered locus">b1653</name>
    <name type="ordered locus">JW1645</name>
</gene>
<keyword id="KW-0067">ATP-binding</keyword>
<keyword id="KW-0227">DNA damage</keyword>
<keyword id="KW-0234">DNA repair</keyword>
<keyword id="KW-0238">DNA-binding</keyword>
<keyword id="KW-0347">Helicase</keyword>
<keyword id="KW-0378">Hydrolase</keyword>
<keyword id="KW-0413">Isomerase</keyword>
<keyword id="KW-0547">Nucleotide-binding</keyword>
<keyword id="KW-1185">Reference proteome</keyword>
<evidence type="ECO:0000250" key="1">
    <source>
        <dbReference type="UniProtKB" id="A0QT91"/>
    </source>
</evidence>
<evidence type="ECO:0000255" key="2">
    <source>
        <dbReference type="PROSITE-ProRule" id="PRU00541"/>
    </source>
</evidence>
<evidence type="ECO:0000255" key="3">
    <source>
        <dbReference type="PROSITE-ProRule" id="PRU00542"/>
    </source>
</evidence>
<evidence type="ECO:0000256" key="4">
    <source>
        <dbReference type="SAM" id="MobiDB-lite"/>
    </source>
</evidence>
<evidence type="ECO:0000269" key="5">
    <source>
    </source>
</evidence>
<evidence type="ECO:0000269" key="6">
    <source>
    </source>
</evidence>
<evidence type="ECO:0000269" key="7">
    <source>
    </source>
</evidence>
<evidence type="ECO:0000269" key="8">
    <source>
    </source>
</evidence>
<evidence type="ECO:0000303" key="9">
    <source>
    </source>
</evidence>
<evidence type="ECO:0000305" key="10"/>
<evidence type="ECO:0000305" key="11">
    <source>
    </source>
</evidence>
<organism>
    <name type="scientific">Escherichia coli (strain K12)</name>
    <dbReference type="NCBI Taxonomy" id="83333"/>
    <lineage>
        <taxon>Bacteria</taxon>
        <taxon>Pseudomonadati</taxon>
        <taxon>Pseudomonadota</taxon>
        <taxon>Gammaproteobacteria</taxon>
        <taxon>Enterobacterales</taxon>
        <taxon>Enterobacteriaceae</taxon>
        <taxon>Escherichia</taxon>
    </lineage>
</organism>
<dbReference type="EC" id="3.2.2.27" evidence="7"/>
<dbReference type="EC" id="5.6.2.-" evidence="6"/>
<dbReference type="EC" id="5.6.2.4" evidence="6"/>
<dbReference type="EMBL" id="L01622">
    <property type="protein sequence ID" value="AAC37009.1"/>
    <property type="molecule type" value="Genomic_DNA"/>
</dbReference>
<dbReference type="EMBL" id="U00096">
    <property type="protein sequence ID" value="AAC74725.1"/>
    <property type="molecule type" value="Genomic_DNA"/>
</dbReference>
<dbReference type="EMBL" id="AP009048">
    <property type="protein sequence ID" value="BAA15419.1"/>
    <property type="molecule type" value="Genomic_DNA"/>
</dbReference>
<dbReference type="PIR" id="G64922">
    <property type="entry name" value="G64922"/>
</dbReference>
<dbReference type="RefSeq" id="NP_416170.1">
    <property type="nucleotide sequence ID" value="NC_000913.3"/>
</dbReference>
<dbReference type="RefSeq" id="WP_001310858.1">
    <property type="nucleotide sequence ID" value="NZ_LN832404.1"/>
</dbReference>
<dbReference type="SMR" id="P30015"/>
<dbReference type="BioGRID" id="4260268">
    <property type="interactions" value="116"/>
</dbReference>
<dbReference type="DIP" id="DIP-10097N"/>
<dbReference type="FunCoup" id="P30015">
    <property type="interactions" value="84"/>
</dbReference>
<dbReference type="IntAct" id="P30015">
    <property type="interactions" value="9"/>
</dbReference>
<dbReference type="STRING" id="511145.b1653"/>
<dbReference type="PaxDb" id="511145-b1653"/>
<dbReference type="EnsemblBacteria" id="AAC74725">
    <property type="protein sequence ID" value="AAC74725"/>
    <property type="gene ID" value="b1653"/>
</dbReference>
<dbReference type="GeneID" id="946156"/>
<dbReference type="KEGG" id="ecj:JW1645"/>
<dbReference type="KEGG" id="eco:b1653"/>
<dbReference type="KEGG" id="ecoc:C3026_09485"/>
<dbReference type="PATRIC" id="fig|1411691.4.peg.606"/>
<dbReference type="EchoBASE" id="EB1510"/>
<dbReference type="eggNOG" id="COG1201">
    <property type="taxonomic scope" value="Bacteria"/>
</dbReference>
<dbReference type="HOGENOM" id="CLU_002025_3_1_6"/>
<dbReference type="InParanoid" id="P30015"/>
<dbReference type="OMA" id="RYGVVFW"/>
<dbReference type="OrthoDB" id="9815222at2"/>
<dbReference type="PhylomeDB" id="P30015"/>
<dbReference type="BioCyc" id="EcoCyc:EG11548-MONOMER"/>
<dbReference type="BioCyc" id="MetaCyc:EG11548-MONOMER"/>
<dbReference type="PRO" id="PR:P30015"/>
<dbReference type="Proteomes" id="UP000000625">
    <property type="component" value="Chromosome"/>
</dbReference>
<dbReference type="GO" id="GO:0033679">
    <property type="term" value="F:3'-5' DNA/RNA helicase activity"/>
    <property type="evidence" value="ECO:0000314"/>
    <property type="project" value="EcoCyc"/>
</dbReference>
<dbReference type="GO" id="GO:0005524">
    <property type="term" value="F:ATP binding"/>
    <property type="evidence" value="ECO:0007669"/>
    <property type="project" value="UniProtKB-KW"/>
</dbReference>
<dbReference type="GO" id="GO:0016887">
    <property type="term" value="F:ATP hydrolysis activity"/>
    <property type="evidence" value="ECO:0000314"/>
    <property type="project" value="EcoCyc"/>
</dbReference>
<dbReference type="GO" id="GO:0003677">
    <property type="term" value="F:DNA binding"/>
    <property type="evidence" value="ECO:0000318"/>
    <property type="project" value="GO_Central"/>
</dbReference>
<dbReference type="GO" id="GO:0042802">
    <property type="term" value="F:identical protein binding"/>
    <property type="evidence" value="ECO:0000314"/>
    <property type="project" value="EcoCyc"/>
</dbReference>
<dbReference type="CDD" id="cd17922">
    <property type="entry name" value="DEXHc_LHR-like"/>
    <property type="match status" value="1"/>
</dbReference>
<dbReference type="CDD" id="cd18796">
    <property type="entry name" value="SF2_C_LHR"/>
    <property type="match status" value="1"/>
</dbReference>
<dbReference type="Gene3D" id="3.40.50.300">
    <property type="entry name" value="P-loop containing nucleotide triphosphate hydrolases"/>
    <property type="match status" value="2"/>
</dbReference>
<dbReference type="InterPro" id="IPR003593">
    <property type="entry name" value="AAA+_ATPase"/>
</dbReference>
<dbReference type="InterPro" id="IPR052511">
    <property type="entry name" value="ATP-dep_Helicase"/>
</dbReference>
<dbReference type="InterPro" id="IPR013701">
    <property type="entry name" value="DEAD/DEAH_assoc"/>
</dbReference>
<dbReference type="InterPro" id="IPR011545">
    <property type="entry name" value="DEAD/DEAH_box_helicase_dom"/>
</dbReference>
<dbReference type="InterPro" id="IPR014001">
    <property type="entry name" value="Helicase_ATP-bd"/>
</dbReference>
<dbReference type="InterPro" id="IPR001650">
    <property type="entry name" value="Helicase_C-like"/>
</dbReference>
<dbReference type="InterPro" id="IPR045628">
    <property type="entry name" value="Lhr_WH_dom"/>
</dbReference>
<dbReference type="InterPro" id="IPR027417">
    <property type="entry name" value="P-loop_NTPase"/>
</dbReference>
<dbReference type="InterPro" id="IPR055369">
    <property type="entry name" value="WH2_Lhr"/>
</dbReference>
<dbReference type="InterPro" id="IPR055368">
    <property type="entry name" value="WH3_Lhr"/>
</dbReference>
<dbReference type="InterPro" id="IPR055367">
    <property type="entry name" value="WH4_Lhr"/>
</dbReference>
<dbReference type="NCBIfam" id="NF007284">
    <property type="entry name" value="PRK09751.1"/>
    <property type="match status" value="1"/>
</dbReference>
<dbReference type="PANTHER" id="PTHR47962:SF5">
    <property type="entry name" value="ATP-DEPENDENT HELICASE LHR-RELATED"/>
    <property type="match status" value="1"/>
</dbReference>
<dbReference type="PANTHER" id="PTHR47962">
    <property type="entry name" value="ATP-DEPENDENT HELICASE LHR-RELATED-RELATED"/>
    <property type="match status" value="1"/>
</dbReference>
<dbReference type="Pfam" id="PF00270">
    <property type="entry name" value="DEAD"/>
    <property type="match status" value="1"/>
</dbReference>
<dbReference type="Pfam" id="PF08494">
    <property type="entry name" value="DEAD_assoc"/>
    <property type="match status" value="1"/>
</dbReference>
<dbReference type="Pfam" id="PF00271">
    <property type="entry name" value="Helicase_C"/>
    <property type="match status" value="1"/>
</dbReference>
<dbReference type="Pfam" id="PF23236">
    <property type="entry name" value="WH2_Lhr"/>
    <property type="match status" value="1"/>
</dbReference>
<dbReference type="Pfam" id="PF23235">
    <property type="entry name" value="WH3_Lhr"/>
    <property type="match status" value="1"/>
</dbReference>
<dbReference type="Pfam" id="PF23234">
    <property type="entry name" value="WH4_Lhr"/>
    <property type="match status" value="1"/>
</dbReference>
<dbReference type="Pfam" id="PF19306">
    <property type="entry name" value="WH_Lhr"/>
    <property type="match status" value="1"/>
</dbReference>
<dbReference type="SMART" id="SM00382">
    <property type="entry name" value="AAA"/>
    <property type="match status" value="1"/>
</dbReference>
<dbReference type="SMART" id="SM00487">
    <property type="entry name" value="DEXDc"/>
    <property type="match status" value="1"/>
</dbReference>
<dbReference type="SMART" id="SM00490">
    <property type="entry name" value="HELICc"/>
    <property type="match status" value="1"/>
</dbReference>
<dbReference type="SUPFAM" id="SSF52540">
    <property type="entry name" value="P-loop containing nucleoside triphosphate hydrolases"/>
    <property type="match status" value="1"/>
</dbReference>
<dbReference type="PROSITE" id="PS51192">
    <property type="entry name" value="HELICASE_ATP_BIND_1"/>
    <property type="match status" value="1"/>
</dbReference>
<dbReference type="PROSITE" id="PS51194">
    <property type="entry name" value="HELICASE_CTER"/>
    <property type="match status" value="1"/>
</dbReference>
<reference key="1">
    <citation type="journal article" date="1995" name="J. Bacteriol.">
        <title>The gene for the longest known Escherichia coli protein is a member of helicase superfamily II.</title>
        <authorList>
            <person name="Reuven N.B."/>
            <person name="Koonin E.V."/>
            <person name="Rudd K.E."/>
            <person name="Deutscher M.P."/>
        </authorList>
    </citation>
    <scope>NUCLEOTIDE SEQUENCE [GENOMIC DNA]</scope>
    <scope>DISRUPTION PHENOTYPE</scope>
    <source>
        <strain>K12</strain>
    </source>
</reference>
<reference key="2">
    <citation type="journal article" date="1996" name="DNA Res.">
        <title>A 570-kb DNA sequence of the Escherichia coli K-12 genome corresponding to the 28.0-40.1 min region on the linkage map.</title>
        <authorList>
            <person name="Aiba H."/>
            <person name="Baba T."/>
            <person name="Fujita K."/>
            <person name="Hayashi K."/>
            <person name="Inada T."/>
            <person name="Isono K."/>
            <person name="Itoh T."/>
            <person name="Kasai H."/>
            <person name="Kashimoto K."/>
            <person name="Kimura S."/>
            <person name="Kitakawa M."/>
            <person name="Kitagawa M."/>
            <person name="Makino K."/>
            <person name="Miki T."/>
            <person name="Mizobuchi K."/>
            <person name="Mori H."/>
            <person name="Mori T."/>
            <person name="Motomura K."/>
            <person name="Nakade S."/>
            <person name="Nakamura Y."/>
            <person name="Nashimoto H."/>
            <person name="Nishio Y."/>
            <person name="Oshima T."/>
            <person name="Saito N."/>
            <person name="Sampei G."/>
            <person name="Seki Y."/>
            <person name="Sivasundaram S."/>
            <person name="Tagami H."/>
            <person name="Takeda J."/>
            <person name="Takemoto K."/>
            <person name="Takeuchi Y."/>
            <person name="Wada C."/>
            <person name="Yamamoto Y."/>
            <person name="Horiuchi T."/>
        </authorList>
    </citation>
    <scope>NUCLEOTIDE SEQUENCE [LARGE SCALE GENOMIC DNA]</scope>
    <source>
        <strain>K12 / W3110 / ATCC 27325 / DSM 5911</strain>
    </source>
</reference>
<reference key="3">
    <citation type="journal article" date="1997" name="Science">
        <title>The complete genome sequence of Escherichia coli K-12.</title>
        <authorList>
            <person name="Blattner F.R."/>
            <person name="Plunkett G. III"/>
            <person name="Bloch C.A."/>
            <person name="Perna N.T."/>
            <person name="Burland V."/>
            <person name="Riley M."/>
            <person name="Collado-Vides J."/>
            <person name="Glasner J.D."/>
            <person name="Rode C.K."/>
            <person name="Mayhew G.F."/>
            <person name="Gregor J."/>
            <person name="Davis N.W."/>
            <person name="Kirkpatrick H.A."/>
            <person name="Goeden M.A."/>
            <person name="Rose D.J."/>
            <person name="Mau B."/>
            <person name="Shao Y."/>
        </authorList>
    </citation>
    <scope>NUCLEOTIDE SEQUENCE [LARGE SCALE GENOMIC DNA]</scope>
    <source>
        <strain>K12 / MG1655 / ATCC 47076</strain>
    </source>
</reference>
<reference key="4">
    <citation type="journal article" date="2006" name="Mol. Syst. Biol.">
        <title>Highly accurate genome sequences of Escherichia coli K-12 strains MG1655 and W3110.</title>
        <authorList>
            <person name="Hayashi K."/>
            <person name="Morooka N."/>
            <person name="Yamamoto Y."/>
            <person name="Fujita K."/>
            <person name="Isono K."/>
            <person name="Choi S."/>
            <person name="Ohtsubo E."/>
            <person name="Baba T."/>
            <person name="Wanner B.L."/>
            <person name="Mori H."/>
            <person name="Horiuchi T."/>
        </authorList>
    </citation>
    <scope>NUCLEOTIDE SEQUENCE [LARGE SCALE GENOMIC DNA]</scope>
    <source>
        <strain>K12 / W3110 / ATCC 27325 / DSM 5911</strain>
    </source>
</reference>
<reference key="5">
    <citation type="journal article" date="1992" name="J. Biol. Chem.">
        <title>Sequence and transcriptional analysis of the Escherichia coli rnt gene encoding RNase T.</title>
        <authorList>
            <person name="Huang S."/>
            <person name="Deutscher M.P."/>
        </authorList>
    </citation>
    <scope>NUCLEOTIDE SEQUENCE [GENOMIC DNA] OF 1-130</scope>
    <source>
        <strain>K12</strain>
    </source>
</reference>
<reference key="6">
    <citation type="journal article" date="2015" name="Mol. Microbiol.">
        <title>Genetic analysis of Escherichia coli RadA: functional motifs and genetic interactions.</title>
        <authorList>
            <person name="Cooper D.L."/>
            <person name="Boyle D.C."/>
            <person name="Lovett S.T."/>
        </authorList>
    </citation>
    <scope>DISRUPTION PHENOTYPE</scope>
    <source>
        <strain>K12 / AB1157</strain>
    </source>
</reference>
<reference key="7">
    <citation type="journal article" date="2021" name="Nucleic Acids Res.">
        <title>Oligomeric quaternary structure of Escherichia coli and Mycobacterium smegmatis Lhr helicases is nucleated by a novel C-terminal domain composed of five winged-helix modules.</title>
        <authorList>
            <person name="Warren G.M."/>
            <person name="Wang J."/>
            <person name="Patel D.J."/>
            <person name="Shuman S."/>
        </authorList>
    </citation>
    <scope>FUNCTION AS A HELICASE</scope>
    <scope>FUNCTION AS AN ATPASE</scope>
    <scope>CATALYTIC ACTIVITY</scope>
    <scope>COFACTOR</scope>
    <scope>BIOPHYSICOCHEMICAL PROPERTIES</scope>
    <scope>SUBUNIT</scope>
    <scope>DOMAIN</scope>
    <scope>MUTAGENESIS OF 179-ASP-GLU-180 AND TRP-620</scope>
    <source>
        <strain>K12 / MG1655 / ATCC 47076</strain>
    </source>
</reference>
<reference key="8">
    <citation type="journal article" date="2023" name="Mol. Microbiol.">
        <title>Escherichia coli DNA repair helicase Lhr is also a uracil-DNA glycosylase.</title>
        <authorList>
            <person name="Buckley R.J."/>
            <person name="Lou-Hing A."/>
            <person name="Hanson K.M."/>
            <person name="Ahmed N.R."/>
            <person name="Cooper C.D.O."/>
            <person name="Bolt E.L."/>
        </authorList>
    </citation>
    <scope>FUNCTION AS A URACIL-DNA GLYCOSYLASE</scope>
    <scope>CATALYTIC ACTIVITY</scope>
    <scope>DOMAIN</scope>
    <scope>DISRUPTION PHENOTYPE</scope>
    <scope>DNA-BINDING</scope>
    <scope>MUTAGENESIS OF ASP-1536</scope>
    <source>
        <strain>K12 / MG1655 / ATCC 47076</strain>
    </source>
</reference>
<proteinExistence type="evidence at protein level"/>
<sequence length="1538" mass="169381">MADNPDPSSLLPDVFSPATRDWFLRAFKQPTAVQPQTWHVAARSEHALVIAPTGSGKTLAAFLYALDRLFREGGEDTREAHKRKTSRILYISPIKALGTDVQRNLQIPLKGIADERRRRGETEVNLRVGIRTGDTPAQERSKLTRNPPDILITTPESLYLMLTSRARETLRGVETVIIDEVHAVAGSKRGAHLALSLERLDALLHTSAQRIGLSATVRSASDVAAFLGGDRPVTVVNPPAMRHPQIRIVVPVANMDDVSSVASGTGEDSHAGREGSIWPYIETGILDEVLRHRSTIVFTNSRGLAEKLTARLNELYAARLQRSPSIAVDAAHFESTSGATSNRVQSSDVFIARSHHGSVSKEQRAITEQALKSGELRCVVATSSLELGIDMGAVDLVIQVATPLSVASGLQRIGRAGHQVGGVSKGLFFPRTRRDLVDSAVIVECMFAGRLENLTPPHNPLDVLAQQTVAAAAMDALQVDEWYSRVRRAAPWKDLPRRVFDATLDMLSGRYPSGDFSAFRPKLVWNRETGILTARPGAQLLAVTSGGTIPDRGMYSVLLPEGEEKAGSRRVGELDEEMVYESRVNDIITLGATSWRIQQITRDQVIVTPAPGRSARLPFWRGEGNGRPAELGEMIGDFLHLLADGAFFSGTIPPWLAEENTIANIQGLIEEQRNATGIVPGSRHLVLERCRDEIGDWRIILHSPYGRRVHEPWAVAIAGRIHALWGADASVVASDDGIVARIPDTDGKLPDAAIFLFEPEKLLQIVREAVGSSALFAARFRECAARALLMPGRTPGHRTPLWQQRLRASQLLEIAQGYPDFPVILETLRECLQDVYDLPALERLMRRLNGGEIQISDVTTTTPSPFATSLLFGYVAEFMYQSDAPLAERRASVLSLDSELLRNLLGQVDPGELLDPQVIRQVEEELQRLAPGRRAKGEEGLFDLLRELGPMTVEDLAQRHTGSSEEVASYLENLLAVKRIFPAMISGQERLACMDDAARLRDALGVRLPESLPEIYLHRVSYPLRDLFLRYLRAHALVTAEQLAHEFSLGIAIVEEQLQQLREQGLVMNLQQDIWVSDEVFRRLRLRSLQAAREATRPVAATTYARLLLERQGVLPATDGSPALFASTSPGVYEGVDGVMRVIEQLAGVGLPASLWESQILPARVRDYSSEMLDELLATGAVIWSGQKKLGEDDGLVALHLQEYAAESFTPAEADQANRSALQQAIVAVLADGGAWFAQQISQRIRDKIGESVDLSALQEALWALVWQGVITSDIWAPLRALTRSSSNARTSTRRSHRARRGRPVYAQPVSPRVSYNTPNLAGRWSLLQVEPLNDTERMLALAENMLDRYGIISRQAVIAENIPGGFPSMQTLCRSMEDSGRIMRGRFVEGLGGAQFAERLTIDRLRDLATQATQTRHYTPVALSANDPANVWGNLLPWPAHPATLVPTRRAGALVVVSGGKLLLYLAQGGKKMLVWQEKEELLAPEVFHALTTALRREPRLRFTLTEVNDLPVRQTPMFTLLREAGFSSSPQGLDWG</sequence>